<keyword id="KW-1185">Reference proteome</keyword>
<keyword id="KW-0687">Ribonucleoprotein</keyword>
<keyword id="KW-0689">Ribosomal protein</keyword>
<keyword id="KW-0694">RNA-binding</keyword>
<keyword id="KW-0699">rRNA-binding</keyword>
<name>RL14_NATTJ</name>
<feature type="chain" id="PRO_1000144302" description="Large ribosomal subunit protein uL14">
    <location>
        <begin position="1"/>
        <end position="122"/>
    </location>
</feature>
<proteinExistence type="inferred from homology"/>
<protein>
    <recommendedName>
        <fullName evidence="1">Large ribosomal subunit protein uL14</fullName>
    </recommendedName>
    <alternativeName>
        <fullName evidence="2">50S ribosomal protein L14</fullName>
    </alternativeName>
</protein>
<sequence>MIQTESTLRVADNTGAREIQCIKVIGAGQKQYANVGDVIVGTIKEATPGGVVKRGQVVRAVIVRTKRGIKRPDGSYIRFDENACVIIDENKDPRGTRIFGPVTRELREKKYMKIISLAPEVL</sequence>
<gene>
    <name evidence="1" type="primary">rplN</name>
    <name type="ordered locus">Nther_0204</name>
</gene>
<accession>B2A4E9</accession>
<reference key="1">
    <citation type="submission" date="2008-04" db="EMBL/GenBank/DDBJ databases">
        <title>Complete sequence of chromosome of Natranaerobius thermophilus JW/NM-WN-LF.</title>
        <authorList>
            <consortium name="US DOE Joint Genome Institute"/>
            <person name="Copeland A."/>
            <person name="Lucas S."/>
            <person name="Lapidus A."/>
            <person name="Glavina del Rio T."/>
            <person name="Dalin E."/>
            <person name="Tice H."/>
            <person name="Bruce D."/>
            <person name="Goodwin L."/>
            <person name="Pitluck S."/>
            <person name="Chertkov O."/>
            <person name="Brettin T."/>
            <person name="Detter J.C."/>
            <person name="Han C."/>
            <person name="Kuske C.R."/>
            <person name="Schmutz J."/>
            <person name="Larimer F."/>
            <person name="Land M."/>
            <person name="Hauser L."/>
            <person name="Kyrpides N."/>
            <person name="Lykidis A."/>
            <person name="Mesbah N.M."/>
            <person name="Wiegel J."/>
        </authorList>
    </citation>
    <scope>NUCLEOTIDE SEQUENCE [LARGE SCALE GENOMIC DNA]</scope>
    <source>
        <strain>ATCC BAA-1301 / DSM 18059 / JW/NM-WN-LF</strain>
    </source>
</reference>
<organism>
    <name type="scientific">Natranaerobius thermophilus (strain ATCC BAA-1301 / DSM 18059 / JW/NM-WN-LF)</name>
    <dbReference type="NCBI Taxonomy" id="457570"/>
    <lineage>
        <taxon>Bacteria</taxon>
        <taxon>Bacillati</taxon>
        <taxon>Bacillota</taxon>
        <taxon>Clostridia</taxon>
        <taxon>Natranaerobiales</taxon>
        <taxon>Natranaerobiaceae</taxon>
        <taxon>Natranaerobius</taxon>
    </lineage>
</organism>
<evidence type="ECO:0000255" key="1">
    <source>
        <dbReference type="HAMAP-Rule" id="MF_01367"/>
    </source>
</evidence>
<evidence type="ECO:0000305" key="2"/>
<dbReference type="EMBL" id="CP001034">
    <property type="protein sequence ID" value="ACB83803.1"/>
    <property type="molecule type" value="Genomic_DNA"/>
</dbReference>
<dbReference type="RefSeq" id="WP_012446692.1">
    <property type="nucleotide sequence ID" value="NC_010718.1"/>
</dbReference>
<dbReference type="SMR" id="B2A4E9"/>
<dbReference type="FunCoup" id="B2A4E9">
    <property type="interactions" value="394"/>
</dbReference>
<dbReference type="STRING" id="457570.Nther_0204"/>
<dbReference type="KEGG" id="nth:Nther_0204"/>
<dbReference type="eggNOG" id="COG0093">
    <property type="taxonomic scope" value="Bacteria"/>
</dbReference>
<dbReference type="HOGENOM" id="CLU_095071_2_1_9"/>
<dbReference type="InParanoid" id="B2A4E9"/>
<dbReference type="OrthoDB" id="9806379at2"/>
<dbReference type="Proteomes" id="UP000001683">
    <property type="component" value="Chromosome"/>
</dbReference>
<dbReference type="GO" id="GO:0022625">
    <property type="term" value="C:cytosolic large ribosomal subunit"/>
    <property type="evidence" value="ECO:0007669"/>
    <property type="project" value="TreeGrafter"/>
</dbReference>
<dbReference type="GO" id="GO:0070180">
    <property type="term" value="F:large ribosomal subunit rRNA binding"/>
    <property type="evidence" value="ECO:0007669"/>
    <property type="project" value="TreeGrafter"/>
</dbReference>
<dbReference type="GO" id="GO:0003735">
    <property type="term" value="F:structural constituent of ribosome"/>
    <property type="evidence" value="ECO:0007669"/>
    <property type="project" value="InterPro"/>
</dbReference>
<dbReference type="GO" id="GO:0006412">
    <property type="term" value="P:translation"/>
    <property type="evidence" value="ECO:0007669"/>
    <property type="project" value="UniProtKB-UniRule"/>
</dbReference>
<dbReference type="CDD" id="cd00337">
    <property type="entry name" value="Ribosomal_uL14"/>
    <property type="match status" value="1"/>
</dbReference>
<dbReference type="FunFam" id="2.40.150.20:FF:000001">
    <property type="entry name" value="50S ribosomal protein L14"/>
    <property type="match status" value="1"/>
</dbReference>
<dbReference type="Gene3D" id="2.40.150.20">
    <property type="entry name" value="Ribosomal protein L14"/>
    <property type="match status" value="1"/>
</dbReference>
<dbReference type="HAMAP" id="MF_01367">
    <property type="entry name" value="Ribosomal_uL14"/>
    <property type="match status" value="1"/>
</dbReference>
<dbReference type="InterPro" id="IPR000218">
    <property type="entry name" value="Ribosomal_uL14"/>
</dbReference>
<dbReference type="InterPro" id="IPR005745">
    <property type="entry name" value="Ribosomal_uL14_bac-type"/>
</dbReference>
<dbReference type="InterPro" id="IPR019972">
    <property type="entry name" value="Ribosomal_uL14_CS"/>
</dbReference>
<dbReference type="InterPro" id="IPR036853">
    <property type="entry name" value="Ribosomal_uL14_sf"/>
</dbReference>
<dbReference type="NCBIfam" id="TIGR01067">
    <property type="entry name" value="rplN_bact"/>
    <property type="match status" value="1"/>
</dbReference>
<dbReference type="PANTHER" id="PTHR11761">
    <property type="entry name" value="50S/60S RIBOSOMAL PROTEIN L14/L23"/>
    <property type="match status" value="1"/>
</dbReference>
<dbReference type="PANTHER" id="PTHR11761:SF3">
    <property type="entry name" value="LARGE RIBOSOMAL SUBUNIT PROTEIN UL14M"/>
    <property type="match status" value="1"/>
</dbReference>
<dbReference type="Pfam" id="PF00238">
    <property type="entry name" value="Ribosomal_L14"/>
    <property type="match status" value="1"/>
</dbReference>
<dbReference type="SMART" id="SM01374">
    <property type="entry name" value="Ribosomal_L14"/>
    <property type="match status" value="1"/>
</dbReference>
<dbReference type="SUPFAM" id="SSF50193">
    <property type="entry name" value="Ribosomal protein L14"/>
    <property type="match status" value="1"/>
</dbReference>
<dbReference type="PROSITE" id="PS00049">
    <property type="entry name" value="RIBOSOMAL_L14"/>
    <property type="match status" value="1"/>
</dbReference>
<comment type="function">
    <text evidence="1">Binds to 23S rRNA. Forms part of two intersubunit bridges in the 70S ribosome.</text>
</comment>
<comment type="subunit">
    <text evidence="1">Part of the 50S ribosomal subunit. Forms a cluster with proteins L3 and L19. In the 70S ribosome, L14 and L19 interact and together make contacts with the 16S rRNA in bridges B5 and B8.</text>
</comment>
<comment type="similarity">
    <text evidence="1">Belongs to the universal ribosomal protein uL14 family.</text>
</comment>